<accession>A1A991</accession>
<organism>
    <name type="scientific">Escherichia coli O1:K1 / APEC</name>
    <dbReference type="NCBI Taxonomy" id="405955"/>
    <lineage>
        <taxon>Bacteria</taxon>
        <taxon>Pseudomonadati</taxon>
        <taxon>Pseudomonadota</taxon>
        <taxon>Gammaproteobacteria</taxon>
        <taxon>Enterobacterales</taxon>
        <taxon>Enterobacteriaceae</taxon>
        <taxon>Escherichia</taxon>
    </lineage>
</organism>
<dbReference type="EC" id="6.3.2.-" evidence="1"/>
<dbReference type="EMBL" id="CP000468">
    <property type="protein sequence ID" value="ABJ00231.1"/>
    <property type="molecule type" value="Genomic_DNA"/>
</dbReference>
<dbReference type="RefSeq" id="WP_000684321.1">
    <property type="nucleotide sequence ID" value="NZ_CADILS010000017.1"/>
</dbReference>
<dbReference type="SMR" id="A1A991"/>
<dbReference type="GeneID" id="93776570"/>
<dbReference type="KEGG" id="ecv:APECO1_1241"/>
<dbReference type="HOGENOM" id="CLU_054353_0_1_6"/>
<dbReference type="Proteomes" id="UP000008216">
    <property type="component" value="Chromosome"/>
</dbReference>
<dbReference type="GO" id="GO:0005737">
    <property type="term" value="C:cytoplasm"/>
    <property type="evidence" value="ECO:0007669"/>
    <property type="project" value="TreeGrafter"/>
</dbReference>
<dbReference type="GO" id="GO:0005524">
    <property type="term" value="F:ATP binding"/>
    <property type="evidence" value="ECO:0007669"/>
    <property type="project" value="UniProtKB-UniRule"/>
</dbReference>
<dbReference type="GO" id="GO:0046872">
    <property type="term" value="F:metal ion binding"/>
    <property type="evidence" value="ECO:0007669"/>
    <property type="project" value="UniProtKB-KW"/>
</dbReference>
<dbReference type="GO" id="GO:0018169">
    <property type="term" value="F:ribosomal S6-glutamic acid ligase activity"/>
    <property type="evidence" value="ECO:0007669"/>
    <property type="project" value="UniProtKB-UniRule"/>
</dbReference>
<dbReference type="GO" id="GO:0036211">
    <property type="term" value="P:protein modification process"/>
    <property type="evidence" value="ECO:0007669"/>
    <property type="project" value="InterPro"/>
</dbReference>
<dbReference type="GO" id="GO:0009432">
    <property type="term" value="P:SOS response"/>
    <property type="evidence" value="ECO:0007669"/>
    <property type="project" value="TreeGrafter"/>
</dbReference>
<dbReference type="GO" id="GO:0006412">
    <property type="term" value="P:translation"/>
    <property type="evidence" value="ECO:0007669"/>
    <property type="project" value="UniProtKB-KW"/>
</dbReference>
<dbReference type="FunFam" id="3.40.50.20:FF:000004">
    <property type="entry name" value="Probable alpha-L-glutamate ligase"/>
    <property type="match status" value="1"/>
</dbReference>
<dbReference type="FunFam" id="3.30.1490.20:FF:000005">
    <property type="entry name" value="Probable alpha-L-glutamate ligase 1"/>
    <property type="match status" value="1"/>
</dbReference>
<dbReference type="FunFam" id="3.30.470.20:FF:000016">
    <property type="entry name" value="Ribosomal protein S6--L-glutamate ligase"/>
    <property type="match status" value="1"/>
</dbReference>
<dbReference type="Gene3D" id="3.40.50.20">
    <property type="match status" value="1"/>
</dbReference>
<dbReference type="Gene3D" id="3.30.1490.20">
    <property type="entry name" value="ATP-grasp fold, A domain"/>
    <property type="match status" value="1"/>
</dbReference>
<dbReference type="Gene3D" id="3.30.470.20">
    <property type="entry name" value="ATP-grasp fold, B domain"/>
    <property type="match status" value="1"/>
</dbReference>
<dbReference type="HAMAP" id="MF_01552">
    <property type="entry name" value="RimK"/>
    <property type="match status" value="1"/>
</dbReference>
<dbReference type="InterPro" id="IPR011761">
    <property type="entry name" value="ATP-grasp"/>
</dbReference>
<dbReference type="InterPro" id="IPR013651">
    <property type="entry name" value="ATP-grasp_RimK-type"/>
</dbReference>
<dbReference type="InterPro" id="IPR013815">
    <property type="entry name" value="ATP_grasp_subdomain_1"/>
</dbReference>
<dbReference type="InterPro" id="IPR023533">
    <property type="entry name" value="RimK"/>
</dbReference>
<dbReference type="InterPro" id="IPR041107">
    <property type="entry name" value="Rimk_N"/>
</dbReference>
<dbReference type="InterPro" id="IPR004666">
    <property type="entry name" value="Rp_bS6_RimK/Lys_biosynth_LsyX"/>
</dbReference>
<dbReference type="NCBIfam" id="NF007764">
    <property type="entry name" value="PRK10446.1"/>
    <property type="match status" value="1"/>
</dbReference>
<dbReference type="NCBIfam" id="TIGR00768">
    <property type="entry name" value="rimK_fam"/>
    <property type="match status" value="1"/>
</dbReference>
<dbReference type="PANTHER" id="PTHR21621:SF7">
    <property type="entry name" value="RIBOSOMAL PROTEIN BS6--L-GLUTAMATE LIGASE"/>
    <property type="match status" value="1"/>
</dbReference>
<dbReference type="PANTHER" id="PTHR21621">
    <property type="entry name" value="RIBOSOMAL PROTEIN S6 MODIFICATION PROTEIN"/>
    <property type="match status" value="1"/>
</dbReference>
<dbReference type="Pfam" id="PF08443">
    <property type="entry name" value="RimK"/>
    <property type="match status" value="1"/>
</dbReference>
<dbReference type="Pfam" id="PF18030">
    <property type="entry name" value="Rimk_N"/>
    <property type="match status" value="1"/>
</dbReference>
<dbReference type="SUPFAM" id="SSF56059">
    <property type="entry name" value="Glutathione synthetase ATP-binding domain-like"/>
    <property type="match status" value="1"/>
</dbReference>
<dbReference type="PROSITE" id="PS50975">
    <property type="entry name" value="ATP_GRASP"/>
    <property type="match status" value="1"/>
</dbReference>
<proteinExistence type="inferred from homology"/>
<evidence type="ECO:0000255" key="1">
    <source>
        <dbReference type="HAMAP-Rule" id="MF_01552"/>
    </source>
</evidence>
<keyword id="KW-0067">ATP-binding</keyword>
<keyword id="KW-0436">Ligase</keyword>
<keyword id="KW-0460">Magnesium</keyword>
<keyword id="KW-0464">Manganese</keyword>
<keyword id="KW-0479">Metal-binding</keyword>
<keyword id="KW-0547">Nucleotide-binding</keyword>
<keyword id="KW-0648">Protein biosynthesis</keyword>
<keyword id="KW-1185">Reference proteome</keyword>
<gene>
    <name evidence="1" type="primary">rimK</name>
    <name type="ordered locus">Ecok1_07370</name>
    <name type="ORF">APECO1_1241</name>
</gene>
<sequence length="300" mass="32436">MKIAILSRDGTLYSCKRLREAAIQRGHLVEILDPLSCYMNINPAASSIHYKGRKLPHFDAVIPRIGTAITFYGTAALRQFEMLGSYPLNESVAIARARDKLRSMQLLARQGIDLPVTGIAHSPDDTSDLIDMVGGAPLVVKLVEGTQGIGVVLAETRQAAESVIDAFRGLNAHILVQEYIKEAQGCDIRCLVVGDEVVAAIERRAKEGDFRSNLHRGGAASVASITPQEREIAIKAARTMALDVAGVDILRANRGPLVMEVNASPGLEGIEKTTGIDIAGKMIRWIERHATTEYCLKTGG</sequence>
<comment type="function">
    <text evidence="1">An L-glutamate ligase that catalyzes the ATP-dependent post-translational addition of glutamate residues to the C-terminus of ribosomal protein bS6 (RpsF). Is also able to catalyze the synthesis of poly-alpha-glutamate in vitro, via ATP hydrolysis from unprotected glutamate as substrate. The number of glutamate residues added to either RpsF or to poly-alpha-glutamate changes with pH.</text>
</comment>
<comment type="cofactor">
    <cofactor evidence="1">
        <name>Mg(2+)</name>
        <dbReference type="ChEBI" id="CHEBI:18420"/>
    </cofactor>
    <cofactor evidence="1">
        <name>Mn(2+)</name>
        <dbReference type="ChEBI" id="CHEBI:29035"/>
    </cofactor>
    <text evidence="1">Binds 2 magnesium or manganese ions per subunit.</text>
</comment>
<comment type="similarity">
    <text evidence="1">Belongs to the RimK family.</text>
</comment>
<protein>
    <recommendedName>
        <fullName evidence="1">Ribosomal protein bS6--L-glutamate ligase</fullName>
        <ecNumber evidence="1">6.3.2.-</ecNumber>
    </recommendedName>
    <alternativeName>
        <fullName evidence="1">Poly-alpha-glutamate synthase</fullName>
    </alternativeName>
    <alternativeName>
        <fullName evidence="1">Ribosomal protein bS6 modification protein</fullName>
    </alternativeName>
</protein>
<reference key="1">
    <citation type="journal article" date="2007" name="J. Bacteriol.">
        <title>The genome sequence of avian pathogenic Escherichia coli strain O1:K1:H7 shares strong similarities with human extraintestinal pathogenic E. coli genomes.</title>
        <authorList>
            <person name="Johnson T.J."/>
            <person name="Kariyawasam S."/>
            <person name="Wannemuehler Y."/>
            <person name="Mangiamele P."/>
            <person name="Johnson S.J."/>
            <person name="Doetkott C."/>
            <person name="Skyberg J.A."/>
            <person name="Lynne A.M."/>
            <person name="Johnson J.R."/>
            <person name="Nolan L.K."/>
        </authorList>
    </citation>
    <scope>NUCLEOTIDE SEQUENCE [LARGE SCALE GENOMIC DNA]</scope>
</reference>
<name>RIMK_ECOK1</name>
<feature type="chain" id="PRO_1000068836" description="Ribosomal protein bS6--L-glutamate ligase">
    <location>
        <begin position="1"/>
        <end position="300"/>
    </location>
</feature>
<feature type="domain" description="ATP-grasp" evidence="1">
    <location>
        <begin position="104"/>
        <end position="287"/>
    </location>
</feature>
<feature type="binding site" evidence="1">
    <location>
        <position position="141"/>
    </location>
    <ligand>
        <name>ATP</name>
        <dbReference type="ChEBI" id="CHEBI:30616"/>
    </ligand>
</feature>
<feature type="binding site" evidence="1">
    <location>
        <begin position="178"/>
        <end position="179"/>
    </location>
    <ligand>
        <name>ATP</name>
        <dbReference type="ChEBI" id="CHEBI:30616"/>
    </ligand>
</feature>
<feature type="binding site" evidence="1">
    <location>
        <position position="187"/>
    </location>
    <ligand>
        <name>ATP</name>
        <dbReference type="ChEBI" id="CHEBI:30616"/>
    </ligand>
</feature>
<feature type="binding site" evidence="1">
    <location>
        <begin position="211"/>
        <end position="213"/>
    </location>
    <ligand>
        <name>ATP</name>
        <dbReference type="ChEBI" id="CHEBI:30616"/>
    </ligand>
</feature>
<feature type="binding site" evidence="1">
    <location>
        <position position="248"/>
    </location>
    <ligand>
        <name>Mg(2+)</name>
        <dbReference type="ChEBI" id="CHEBI:18420"/>
        <label>1</label>
    </ligand>
</feature>
<feature type="binding site" evidence="1">
    <location>
        <position position="248"/>
    </location>
    <ligand>
        <name>Mn(2+)</name>
        <dbReference type="ChEBI" id="CHEBI:29035"/>
        <label>1</label>
    </ligand>
</feature>
<feature type="binding site" evidence="1">
    <location>
        <position position="260"/>
    </location>
    <ligand>
        <name>Mg(2+)</name>
        <dbReference type="ChEBI" id="CHEBI:18420"/>
        <label>1</label>
    </ligand>
</feature>
<feature type="binding site" evidence="1">
    <location>
        <position position="260"/>
    </location>
    <ligand>
        <name>Mg(2+)</name>
        <dbReference type="ChEBI" id="CHEBI:18420"/>
        <label>2</label>
    </ligand>
</feature>
<feature type="binding site" evidence="1">
    <location>
        <position position="260"/>
    </location>
    <ligand>
        <name>Mn(2+)</name>
        <dbReference type="ChEBI" id="CHEBI:29035"/>
        <label>1</label>
    </ligand>
</feature>
<feature type="binding site" evidence="1">
    <location>
        <position position="260"/>
    </location>
    <ligand>
        <name>Mn(2+)</name>
        <dbReference type="ChEBI" id="CHEBI:29035"/>
        <label>2</label>
    </ligand>
</feature>
<feature type="binding site" evidence="1">
    <location>
        <position position="262"/>
    </location>
    <ligand>
        <name>Mg(2+)</name>
        <dbReference type="ChEBI" id="CHEBI:18420"/>
        <label>2</label>
    </ligand>
</feature>
<feature type="binding site" evidence="1">
    <location>
        <position position="262"/>
    </location>
    <ligand>
        <name>Mn(2+)</name>
        <dbReference type="ChEBI" id="CHEBI:29035"/>
        <label>2</label>
    </ligand>
</feature>